<reference key="1">
    <citation type="journal article" date="2004" name="Science">
        <title>The 1.2-megabase genome sequence of Mimivirus.</title>
        <authorList>
            <person name="Raoult D."/>
            <person name="Audic S."/>
            <person name="Robert C."/>
            <person name="Abergel C."/>
            <person name="Renesto P."/>
            <person name="Ogata H."/>
            <person name="La Scola B."/>
            <person name="Susan M."/>
            <person name="Claverie J.-M."/>
        </authorList>
    </citation>
    <scope>NUCLEOTIDE SEQUENCE [LARGE SCALE GENOMIC DNA]</scope>
    <source>
        <strain>Rowbotham-Bradford</strain>
    </source>
</reference>
<proteinExistence type="predicted"/>
<organism>
    <name type="scientific">Acanthamoeba polyphaga mimivirus</name>
    <name type="common">APMV</name>
    <dbReference type="NCBI Taxonomy" id="212035"/>
    <lineage>
        <taxon>Viruses</taxon>
        <taxon>Varidnaviria</taxon>
        <taxon>Bamfordvirae</taxon>
        <taxon>Nucleocytoviricota</taxon>
        <taxon>Megaviricetes</taxon>
        <taxon>Imitervirales</taxon>
        <taxon>Mimiviridae</taxon>
        <taxon>Megamimivirinae</taxon>
        <taxon>Mimivirus</taxon>
        <taxon>Mimivirus bradfordmassiliense</taxon>
    </lineage>
</organism>
<gene>
    <name type="ordered locus">MIMI_L285</name>
</gene>
<feature type="chain" id="PRO_0000251113" description="Uncharacterized protein L285">
    <location>
        <begin position="1"/>
        <end position="215"/>
    </location>
</feature>
<dbReference type="EMBL" id="AY653733">
    <property type="protein sequence ID" value="AAV50557.1"/>
    <property type="molecule type" value="Genomic_DNA"/>
</dbReference>
<dbReference type="KEGG" id="vg:9924900"/>
<dbReference type="OrthoDB" id="10669at10239"/>
<dbReference type="Proteomes" id="UP000001134">
    <property type="component" value="Genome"/>
</dbReference>
<sequence>MKLLSVLALLMFIGVVLADNDCYNPKCGRGHFNLKGKKPLCVPPAPILTEKYFTNITNHIAVVVDSTVTKPGQQSQLDVQKEYFNRLTLGPWKAPSVFRNYTAYYCGDAIPFNVNIHLTASRDYDNGTAFHEIFELVDKSSNFFRDWYDEMGPSIVYHGLMLKTDDNGVPVMNACQLRQYMEQQNFQLVFHLPSCPKDAYFFRAGYAHVEVVIPC</sequence>
<name>YL285_MIMIV</name>
<organismHost>
    <name type="scientific">Acanthamoeba polyphaga</name>
    <name type="common">Amoeba</name>
    <dbReference type="NCBI Taxonomy" id="5757"/>
</organismHost>
<keyword id="KW-1185">Reference proteome</keyword>
<accession>Q5UPW2</accession>
<protein>
    <recommendedName>
        <fullName>Uncharacterized protein L285</fullName>
    </recommendedName>
</protein>